<feature type="chain" id="PRO_1000004552" description="Translation initiation factor IF-3">
    <location>
        <begin position="1"/>
        <end position="190"/>
    </location>
</feature>
<evidence type="ECO:0000255" key="1">
    <source>
        <dbReference type="HAMAP-Rule" id="MF_00080"/>
    </source>
</evidence>
<protein>
    <recommendedName>
        <fullName evidence="1">Translation initiation factor IF-3</fullName>
    </recommendedName>
</protein>
<proteinExistence type="inferred from homology"/>
<name>IF3_PROM0</name>
<comment type="function">
    <text evidence="1">IF-3 binds to the 30S ribosomal subunit and shifts the equilibrium between 70S ribosomes and their 50S and 30S subunits in favor of the free subunits, thus enhancing the availability of 30S subunits on which protein synthesis initiation begins.</text>
</comment>
<comment type="subunit">
    <text evidence="1">Monomer.</text>
</comment>
<comment type="subcellular location">
    <subcellularLocation>
        <location evidence="1">Cytoplasm</location>
    </subcellularLocation>
</comment>
<comment type="similarity">
    <text evidence="1">Belongs to the IF-3 family.</text>
</comment>
<organism>
    <name type="scientific">Prochlorococcus marinus (strain MIT 9301)</name>
    <dbReference type="NCBI Taxonomy" id="167546"/>
    <lineage>
        <taxon>Bacteria</taxon>
        <taxon>Bacillati</taxon>
        <taxon>Cyanobacteriota</taxon>
        <taxon>Cyanophyceae</taxon>
        <taxon>Synechococcales</taxon>
        <taxon>Prochlorococcaceae</taxon>
        <taxon>Prochlorococcus</taxon>
    </lineage>
</organism>
<keyword id="KW-0963">Cytoplasm</keyword>
<keyword id="KW-0396">Initiation factor</keyword>
<keyword id="KW-0648">Protein biosynthesis</keyword>
<keyword id="KW-1185">Reference proteome</keyword>
<gene>
    <name evidence="1" type="primary">infC</name>
    <name type="ordered locus">P9301_18271</name>
</gene>
<sequence length="190" mass="22271">MPPRPRFDRRAPVRELPNINERIKYPQLRVVDSDGKQLGVIDRLKALEIASQRELDLVLVSEKANPPVCRIMDYGKYKFEQEKKAKEARKKSHQTEVKEVKMRYKIDKHDYDVRIGQATKFLKSGDKVKCTVIFRGREIQHSNLAETLLLRMANDLEEQSEVQQKPKREGRNMIMFLSPRKTPLIKKDDA</sequence>
<dbReference type="EMBL" id="CP000576">
    <property type="protein sequence ID" value="ABO18450.1"/>
    <property type="molecule type" value="Genomic_DNA"/>
</dbReference>
<dbReference type="RefSeq" id="WP_011863735.1">
    <property type="nucleotide sequence ID" value="NC_009091.1"/>
</dbReference>
<dbReference type="SMR" id="A3PFC5"/>
<dbReference type="STRING" id="167546.P9301_18271"/>
<dbReference type="KEGG" id="pmg:P9301_18271"/>
<dbReference type="eggNOG" id="COG0290">
    <property type="taxonomic scope" value="Bacteria"/>
</dbReference>
<dbReference type="HOGENOM" id="CLU_054919_3_2_3"/>
<dbReference type="OrthoDB" id="9806014at2"/>
<dbReference type="Proteomes" id="UP000001430">
    <property type="component" value="Chromosome"/>
</dbReference>
<dbReference type="GO" id="GO:0005829">
    <property type="term" value="C:cytosol"/>
    <property type="evidence" value="ECO:0007669"/>
    <property type="project" value="TreeGrafter"/>
</dbReference>
<dbReference type="GO" id="GO:0016020">
    <property type="term" value="C:membrane"/>
    <property type="evidence" value="ECO:0007669"/>
    <property type="project" value="TreeGrafter"/>
</dbReference>
<dbReference type="GO" id="GO:0043022">
    <property type="term" value="F:ribosome binding"/>
    <property type="evidence" value="ECO:0007669"/>
    <property type="project" value="TreeGrafter"/>
</dbReference>
<dbReference type="GO" id="GO:0003743">
    <property type="term" value="F:translation initiation factor activity"/>
    <property type="evidence" value="ECO:0007669"/>
    <property type="project" value="UniProtKB-UniRule"/>
</dbReference>
<dbReference type="GO" id="GO:0032790">
    <property type="term" value="P:ribosome disassembly"/>
    <property type="evidence" value="ECO:0007669"/>
    <property type="project" value="TreeGrafter"/>
</dbReference>
<dbReference type="FunFam" id="3.10.20.80:FF:000001">
    <property type="entry name" value="Translation initiation factor IF-3"/>
    <property type="match status" value="1"/>
</dbReference>
<dbReference type="FunFam" id="3.30.110.10:FF:000001">
    <property type="entry name" value="Translation initiation factor IF-3"/>
    <property type="match status" value="1"/>
</dbReference>
<dbReference type="Gene3D" id="3.30.110.10">
    <property type="entry name" value="Translation initiation factor 3 (IF-3), C-terminal domain"/>
    <property type="match status" value="1"/>
</dbReference>
<dbReference type="Gene3D" id="3.10.20.80">
    <property type="entry name" value="Translation initiation factor 3 (IF-3), N-terminal domain"/>
    <property type="match status" value="1"/>
</dbReference>
<dbReference type="HAMAP" id="MF_00080">
    <property type="entry name" value="IF_3"/>
    <property type="match status" value="1"/>
</dbReference>
<dbReference type="InterPro" id="IPR036788">
    <property type="entry name" value="T_IF-3_C_sf"/>
</dbReference>
<dbReference type="InterPro" id="IPR036787">
    <property type="entry name" value="T_IF-3_N_sf"/>
</dbReference>
<dbReference type="InterPro" id="IPR019813">
    <property type="entry name" value="Translation_initiation_fac3_CS"/>
</dbReference>
<dbReference type="InterPro" id="IPR001288">
    <property type="entry name" value="Translation_initiation_fac_3"/>
</dbReference>
<dbReference type="InterPro" id="IPR019815">
    <property type="entry name" value="Translation_initiation_fac_3_C"/>
</dbReference>
<dbReference type="InterPro" id="IPR019814">
    <property type="entry name" value="Translation_initiation_fac_3_N"/>
</dbReference>
<dbReference type="NCBIfam" id="TIGR00168">
    <property type="entry name" value="infC"/>
    <property type="match status" value="1"/>
</dbReference>
<dbReference type="PANTHER" id="PTHR10938">
    <property type="entry name" value="TRANSLATION INITIATION FACTOR IF-3"/>
    <property type="match status" value="1"/>
</dbReference>
<dbReference type="PANTHER" id="PTHR10938:SF0">
    <property type="entry name" value="TRANSLATION INITIATION FACTOR IF-3, MITOCHONDRIAL"/>
    <property type="match status" value="1"/>
</dbReference>
<dbReference type="Pfam" id="PF00707">
    <property type="entry name" value="IF3_C"/>
    <property type="match status" value="1"/>
</dbReference>
<dbReference type="Pfam" id="PF05198">
    <property type="entry name" value="IF3_N"/>
    <property type="match status" value="1"/>
</dbReference>
<dbReference type="SUPFAM" id="SSF55200">
    <property type="entry name" value="Translation initiation factor IF3, C-terminal domain"/>
    <property type="match status" value="1"/>
</dbReference>
<dbReference type="SUPFAM" id="SSF54364">
    <property type="entry name" value="Translation initiation factor IF3, N-terminal domain"/>
    <property type="match status" value="1"/>
</dbReference>
<dbReference type="PROSITE" id="PS00938">
    <property type="entry name" value="IF3"/>
    <property type="match status" value="1"/>
</dbReference>
<accession>A3PFC5</accession>
<reference key="1">
    <citation type="journal article" date="2007" name="PLoS Genet.">
        <title>Patterns and implications of gene gain and loss in the evolution of Prochlorococcus.</title>
        <authorList>
            <person name="Kettler G.C."/>
            <person name="Martiny A.C."/>
            <person name="Huang K."/>
            <person name="Zucker J."/>
            <person name="Coleman M.L."/>
            <person name="Rodrigue S."/>
            <person name="Chen F."/>
            <person name="Lapidus A."/>
            <person name="Ferriera S."/>
            <person name="Johnson J."/>
            <person name="Steglich C."/>
            <person name="Church G.M."/>
            <person name="Richardson P."/>
            <person name="Chisholm S.W."/>
        </authorList>
    </citation>
    <scope>NUCLEOTIDE SEQUENCE [LARGE SCALE GENOMIC DNA]</scope>
    <source>
        <strain>MIT 9301</strain>
    </source>
</reference>